<accession>P54644</accession>
<accession>Q55EY2</accession>
<feature type="chain" id="PRO_0000086192" description="RAC family serine/threonine-protein kinase homolog">
    <location>
        <begin position="1"/>
        <end position="444"/>
    </location>
</feature>
<feature type="domain" description="PH" evidence="1">
    <location>
        <begin position="5"/>
        <end position="100"/>
    </location>
</feature>
<feature type="domain" description="Protein kinase" evidence="2">
    <location>
        <begin position="120"/>
        <end position="374"/>
    </location>
</feature>
<feature type="domain" description="AGC-kinase C-terminal" evidence="3">
    <location>
        <begin position="375"/>
        <end position="444"/>
    </location>
</feature>
<feature type="active site" description="Proton acceptor" evidence="2 4">
    <location>
        <position position="243"/>
    </location>
</feature>
<feature type="binding site" evidence="2">
    <location>
        <begin position="126"/>
        <end position="134"/>
    </location>
    <ligand>
        <name>ATP</name>
        <dbReference type="ChEBI" id="CHEBI:30616"/>
    </ligand>
</feature>
<feature type="binding site" evidence="2">
    <location>
        <position position="149"/>
    </location>
    <ligand>
        <name>ATP</name>
        <dbReference type="ChEBI" id="CHEBI:30616"/>
    </ligand>
</feature>
<feature type="modified residue" description="Phosphothreonine" evidence="7">
    <location>
        <position position="278"/>
    </location>
</feature>
<organism>
    <name type="scientific">Dictyostelium discoideum</name>
    <name type="common">Social amoeba</name>
    <dbReference type="NCBI Taxonomy" id="44689"/>
    <lineage>
        <taxon>Eukaryota</taxon>
        <taxon>Amoebozoa</taxon>
        <taxon>Evosea</taxon>
        <taxon>Eumycetozoa</taxon>
        <taxon>Dictyostelia</taxon>
        <taxon>Dictyosteliales</taxon>
        <taxon>Dictyosteliaceae</taxon>
        <taxon>Dictyostelium</taxon>
    </lineage>
</organism>
<protein>
    <recommendedName>
        <fullName>RAC family serine/threonine-protein kinase homolog</fullName>
        <ecNumber>2.7.11.1</ecNumber>
    </recommendedName>
</protein>
<name>KRAC_DICDI</name>
<keyword id="KW-0067">ATP-binding</keyword>
<keyword id="KW-0145">Chemotaxis</keyword>
<keyword id="KW-0418">Kinase</keyword>
<keyword id="KW-0547">Nucleotide-binding</keyword>
<keyword id="KW-0597">Phosphoprotein</keyword>
<keyword id="KW-1185">Reference proteome</keyword>
<keyword id="KW-0723">Serine/threonine-protein kinase</keyword>
<keyword id="KW-0808">Transferase</keyword>
<dbReference type="EC" id="2.7.11.1"/>
<dbReference type="EMBL" id="U15210">
    <property type="protein sequence ID" value="AAA76692.1"/>
    <property type="molecule type" value="mRNA"/>
</dbReference>
<dbReference type="EMBL" id="AAFI02000004">
    <property type="protein sequence ID" value="EAL72899.1"/>
    <property type="molecule type" value="Genomic_DNA"/>
</dbReference>
<dbReference type="RefSeq" id="XP_646888.1">
    <property type="nucleotide sequence ID" value="XM_641796.1"/>
</dbReference>
<dbReference type="SMR" id="P54644"/>
<dbReference type="BioGRID" id="1241576">
    <property type="interactions" value="1"/>
</dbReference>
<dbReference type="FunCoup" id="P54644">
    <property type="interactions" value="59"/>
</dbReference>
<dbReference type="STRING" id="44689.P54644"/>
<dbReference type="iPTMnet" id="P54644"/>
<dbReference type="PaxDb" id="44689-DDB0191195"/>
<dbReference type="EnsemblProtists" id="EAL72899">
    <property type="protein sequence ID" value="EAL72899"/>
    <property type="gene ID" value="DDB_G0268620"/>
</dbReference>
<dbReference type="GeneID" id="8616573"/>
<dbReference type="KEGG" id="ddi:DDB_G0268620"/>
<dbReference type="dictyBase" id="DDB_G0268620">
    <property type="gene designation" value="pkbA"/>
</dbReference>
<dbReference type="VEuPathDB" id="AmoebaDB:DDB_G0268620"/>
<dbReference type="eggNOG" id="KOG0598">
    <property type="taxonomic scope" value="Eukaryota"/>
</dbReference>
<dbReference type="HOGENOM" id="CLU_000288_63_5_1"/>
<dbReference type="InParanoid" id="P54644"/>
<dbReference type="OMA" id="VIERMFH"/>
<dbReference type="PhylomeDB" id="P54644"/>
<dbReference type="Reactome" id="R-DDI-114508">
    <property type="pathway name" value="Effects of PIP2 hydrolysis"/>
</dbReference>
<dbReference type="Reactome" id="R-DDI-114516">
    <property type="pathway name" value="Disinhibition of SNARE formation"/>
</dbReference>
<dbReference type="Reactome" id="R-DDI-1169091">
    <property type="pathway name" value="Activation of NF-kappaB in B cells"/>
</dbReference>
<dbReference type="Reactome" id="R-DDI-1257604">
    <property type="pathway name" value="PIP3 activates AKT signaling"/>
</dbReference>
<dbReference type="Reactome" id="R-DDI-1358803">
    <property type="pathway name" value="Downregulation of ERBB2:ERBB3 signaling"/>
</dbReference>
<dbReference type="Reactome" id="R-DDI-1474151">
    <property type="pathway name" value="Tetrahydrobiopterin (BH4) synthesis, recycling, salvage and regulation"/>
</dbReference>
<dbReference type="Reactome" id="R-DDI-1489509">
    <property type="pathway name" value="DAG and IP3 signaling"/>
</dbReference>
<dbReference type="Reactome" id="R-DDI-165158">
    <property type="pathway name" value="Activation of AKT2"/>
</dbReference>
<dbReference type="Reactome" id="R-DDI-165159">
    <property type="pathway name" value="MTOR signalling"/>
</dbReference>
<dbReference type="Reactome" id="R-DDI-165181">
    <property type="pathway name" value="Inhibition of TSC complex formation by PKB"/>
</dbReference>
<dbReference type="Reactome" id="R-DDI-198323">
    <property type="pathway name" value="AKT phosphorylates targets in the cytosol"/>
</dbReference>
<dbReference type="Reactome" id="R-DDI-198693">
    <property type="pathway name" value="AKT phosphorylates targets in the nucleus"/>
</dbReference>
<dbReference type="Reactome" id="R-DDI-199418">
    <property type="pathway name" value="Negative regulation of the PI3K/AKT network"/>
</dbReference>
<dbReference type="Reactome" id="R-DDI-202424">
    <property type="pathway name" value="Downstream TCR signaling"/>
</dbReference>
<dbReference type="Reactome" id="R-DDI-2029485">
    <property type="pathway name" value="Role of phospholipids in phagocytosis"/>
</dbReference>
<dbReference type="Reactome" id="R-DDI-203615">
    <property type="pathway name" value="eNOS activation"/>
</dbReference>
<dbReference type="Reactome" id="R-DDI-2179392">
    <property type="pathway name" value="EGFR Transactivation by Gastrin"/>
</dbReference>
<dbReference type="Reactome" id="R-DDI-2871837">
    <property type="pathway name" value="FCERI mediated NF-kB activation"/>
</dbReference>
<dbReference type="Reactome" id="R-DDI-389357">
    <property type="pathway name" value="CD28 dependent PI3K/Akt signaling"/>
</dbReference>
<dbReference type="Reactome" id="R-DDI-389513">
    <property type="pathway name" value="Co-inhibition by CTLA4"/>
</dbReference>
<dbReference type="Reactome" id="R-DDI-392451">
    <property type="pathway name" value="G beta:gamma signalling through PI3Kgamma"/>
</dbReference>
<dbReference type="Reactome" id="R-DDI-399997">
    <property type="pathway name" value="Acetylcholine regulates insulin secretion"/>
</dbReference>
<dbReference type="Reactome" id="R-DDI-4419969">
    <property type="pathway name" value="Depolymerization of the Nuclear Lamina"/>
</dbReference>
<dbReference type="Reactome" id="R-DDI-450385">
    <property type="pathway name" value="Butyrate Response Factor 1 (BRF1) binds and destabilizes mRNA"/>
</dbReference>
<dbReference type="Reactome" id="R-DDI-5218920">
    <property type="pathway name" value="VEGFR2 mediated vascular permeability"/>
</dbReference>
<dbReference type="Reactome" id="R-DDI-5218921">
    <property type="pathway name" value="VEGFR2 mediated cell proliferation"/>
</dbReference>
<dbReference type="Reactome" id="R-DDI-5607764">
    <property type="pathway name" value="CLEC7A (Dectin-1) signaling"/>
</dbReference>
<dbReference type="Reactome" id="R-DDI-5625740">
    <property type="pathway name" value="RHO GTPases activate PKNs"/>
</dbReference>
<dbReference type="Reactome" id="R-DDI-5625886">
    <property type="pathway name" value="Activated PKN1 stimulates transcription of AR (androgen receptor) regulated genes KLK2 and KLK3"/>
</dbReference>
<dbReference type="Reactome" id="R-DDI-5628897">
    <property type="pathway name" value="TP53 Regulates Metabolic Genes"/>
</dbReference>
<dbReference type="Reactome" id="R-DDI-6798695">
    <property type="pathway name" value="Neutrophil degranulation"/>
</dbReference>
<dbReference type="Reactome" id="R-DDI-6804757">
    <property type="pathway name" value="Regulation of TP53 Degradation"/>
</dbReference>
<dbReference type="Reactome" id="R-DDI-6804758">
    <property type="pathway name" value="Regulation of TP53 Activity through Acetylation"/>
</dbReference>
<dbReference type="Reactome" id="R-DDI-6811558">
    <property type="pathway name" value="PI5P, PP2A and IER3 Regulate PI3K/AKT Signaling"/>
</dbReference>
<dbReference type="Reactome" id="R-DDI-76005">
    <property type="pathway name" value="Response to elevated platelet cytosolic Ca2+"/>
</dbReference>
<dbReference type="Reactome" id="R-DDI-8876198">
    <property type="pathway name" value="RAB GEFs exchange GTP for GDP on RABs"/>
</dbReference>
<dbReference type="Reactome" id="R-DDI-8948751">
    <property type="pathway name" value="Regulation of PTEN stability and activity"/>
</dbReference>
<dbReference type="Reactome" id="R-DDI-9009391">
    <property type="pathway name" value="Extra-nuclear estrogen signaling"/>
</dbReference>
<dbReference type="Reactome" id="R-DDI-9013149">
    <property type="pathway name" value="RAC1 GTPase cycle"/>
</dbReference>
<dbReference type="Reactome" id="R-DDI-9031628">
    <property type="pathway name" value="NGF-stimulated transcription"/>
</dbReference>
<dbReference type="Reactome" id="R-DDI-9634635">
    <property type="pathway name" value="Estrogen-stimulated signaling through PRKCZ"/>
</dbReference>
<dbReference type="Reactome" id="R-DDI-9841251">
    <property type="pathway name" value="Mitochondrial unfolded protein response (UPRmt)"/>
</dbReference>
<dbReference type="Reactome" id="R-DDI-9856530">
    <property type="pathway name" value="High laminar flow shear stress activates signaling by PIEZO1 and PECAM1:CDH5:KDR in endothelial cells"/>
</dbReference>
<dbReference type="PRO" id="PR:P54644"/>
<dbReference type="Proteomes" id="UP000002195">
    <property type="component" value="Chromosome 1"/>
</dbReference>
<dbReference type="GO" id="GO:0005938">
    <property type="term" value="C:cell cortex"/>
    <property type="evidence" value="ECO:0000314"/>
    <property type="project" value="dictyBase"/>
</dbReference>
<dbReference type="GO" id="GO:0031252">
    <property type="term" value="C:cell leading edge"/>
    <property type="evidence" value="ECO:0000314"/>
    <property type="project" value="dictyBase"/>
</dbReference>
<dbReference type="GO" id="GO:0005829">
    <property type="term" value="C:cytosol"/>
    <property type="evidence" value="ECO:0000314"/>
    <property type="project" value="dictyBase"/>
</dbReference>
<dbReference type="GO" id="GO:0005886">
    <property type="term" value="C:plasma membrane"/>
    <property type="evidence" value="ECO:0000314"/>
    <property type="project" value="dictyBase"/>
</dbReference>
<dbReference type="GO" id="GO:0005524">
    <property type="term" value="F:ATP binding"/>
    <property type="evidence" value="ECO:0000305"/>
    <property type="project" value="dictyBase"/>
</dbReference>
<dbReference type="GO" id="GO:0004691">
    <property type="term" value="F:cAMP-dependent protein kinase activity"/>
    <property type="evidence" value="ECO:0000314"/>
    <property type="project" value="dictyBase"/>
</dbReference>
<dbReference type="GO" id="GO:0031005">
    <property type="term" value="F:filamin binding"/>
    <property type="evidence" value="ECO:0000353"/>
    <property type="project" value="dictyBase"/>
</dbReference>
<dbReference type="GO" id="GO:0005547">
    <property type="term" value="F:phosphatidylinositol-3,4,5-trisphosphate binding"/>
    <property type="evidence" value="ECO:0000314"/>
    <property type="project" value="dictyBase"/>
</dbReference>
<dbReference type="GO" id="GO:0030295">
    <property type="term" value="F:protein kinase activator activity"/>
    <property type="evidence" value="ECO:0000314"/>
    <property type="project" value="dictyBase"/>
</dbReference>
<dbReference type="GO" id="GO:0019887">
    <property type="term" value="F:protein kinase regulator activity"/>
    <property type="evidence" value="ECO:0000304"/>
    <property type="project" value="dictyBase"/>
</dbReference>
<dbReference type="GO" id="GO:0106310">
    <property type="term" value="F:protein serine kinase activity"/>
    <property type="evidence" value="ECO:0007669"/>
    <property type="project" value="RHEA"/>
</dbReference>
<dbReference type="GO" id="GO:0004674">
    <property type="term" value="F:protein serine/threonine kinase activity"/>
    <property type="evidence" value="ECO:0000314"/>
    <property type="project" value="dictyBase"/>
</dbReference>
<dbReference type="GO" id="GO:0031267">
    <property type="term" value="F:small GTPase binding"/>
    <property type="evidence" value="ECO:0000353"/>
    <property type="project" value="dictyBase"/>
</dbReference>
<dbReference type="GO" id="GO:0032060">
    <property type="term" value="P:bleb assembly"/>
    <property type="evidence" value="ECO:0000315"/>
    <property type="project" value="dictyBase"/>
</dbReference>
<dbReference type="GO" id="GO:1904630">
    <property type="term" value="P:cellular response to diterpene"/>
    <property type="evidence" value="ECO:0000316"/>
    <property type="project" value="dictyBase"/>
</dbReference>
<dbReference type="GO" id="GO:0043327">
    <property type="term" value="P:chemotaxis to cAMP"/>
    <property type="evidence" value="ECO:0000315"/>
    <property type="project" value="dictyBase"/>
</dbReference>
<dbReference type="GO" id="GO:0031154">
    <property type="term" value="P:culmination involved in sorocarp development"/>
    <property type="evidence" value="ECO:0000304"/>
    <property type="project" value="dictyBase"/>
</dbReference>
<dbReference type="GO" id="GO:0030010">
    <property type="term" value="P:establishment of cell polarity"/>
    <property type="evidence" value="ECO:0000316"/>
    <property type="project" value="dictyBase"/>
</dbReference>
<dbReference type="GO" id="GO:0007163">
    <property type="term" value="P:establishment or maintenance of cell polarity"/>
    <property type="evidence" value="ECO:0000304"/>
    <property type="project" value="dictyBase"/>
</dbReference>
<dbReference type="GO" id="GO:0140986">
    <property type="term" value="P:G protein-coupled chemorepellent receptor signaling pathway"/>
    <property type="evidence" value="ECO:0000315"/>
    <property type="project" value="dictyBase"/>
</dbReference>
<dbReference type="GO" id="GO:0035556">
    <property type="term" value="P:intracellular signal transduction"/>
    <property type="evidence" value="ECO:0000318"/>
    <property type="project" value="GO_Central"/>
</dbReference>
<dbReference type="GO" id="GO:0044351">
    <property type="term" value="P:macropinocytosis"/>
    <property type="evidence" value="ECO:0000315"/>
    <property type="project" value="dictyBase"/>
</dbReference>
<dbReference type="GO" id="GO:0030011">
    <property type="term" value="P:maintenance of cell polarity"/>
    <property type="evidence" value="ECO:0000315"/>
    <property type="project" value="dictyBase"/>
</dbReference>
<dbReference type="GO" id="GO:0000281">
    <property type="term" value="P:mitotic cytokinesis"/>
    <property type="evidence" value="ECO:0000316"/>
    <property type="project" value="dictyBase"/>
</dbReference>
<dbReference type="GO" id="GO:0031036">
    <property type="term" value="P:myosin II filament assembly"/>
    <property type="evidence" value="ECO:0000304"/>
    <property type="project" value="dictyBase"/>
</dbReference>
<dbReference type="GO" id="GO:0050765">
    <property type="term" value="P:negative regulation of phagocytosis"/>
    <property type="evidence" value="ECO:0000315"/>
    <property type="project" value="dictyBase"/>
</dbReference>
<dbReference type="GO" id="GO:0046580">
    <property type="term" value="P:negative regulation of Ras protein signal transduction"/>
    <property type="evidence" value="ECO:0000316"/>
    <property type="project" value="dictyBase"/>
</dbReference>
<dbReference type="GO" id="GO:0090382">
    <property type="term" value="P:phagosome maturation"/>
    <property type="evidence" value="ECO:0000315"/>
    <property type="project" value="dictyBase"/>
</dbReference>
<dbReference type="GO" id="GO:0048015">
    <property type="term" value="P:phosphatidylinositol-mediated signaling"/>
    <property type="evidence" value="ECO:0000304"/>
    <property type="project" value="dictyBase"/>
</dbReference>
<dbReference type="GO" id="GO:0110094">
    <property type="term" value="P:polyphosphate-mediated signaling"/>
    <property type="evidence" value="ECO:0000315"/>
    <property type="project" value="dictyBase"/>
</dbReference>
<dbReference type="GO" id="GO:1905303">
    <property type="term" value="P:positive regulation of macropinocytosis"/>
    <property type="evidence" value="ECO:0000315"/>
    <property type="project" value="dictyBase"/>
</dbReference>
<dbReference type="GO" id="GO:0031269">
    <property type="term" value="P:pseudopodium assembly"/>
    <property type="evidence" value="ECO:0000316"/>
    <property type="project" value="dictyBase"/>
</dbReference>
<dbReference type="GO" id="GO:0030334">
    <property type="term" value="P:regulation of cell migration"/>
    <property type="evidence" value="ECO:0000316"/>
    <property type="project" value="dictyBase"/>
</dbReference>
<dbReference type="GO" id="GO:0050920">
    <property type="term" value="P:regulation of chemotaxis"/>
    <property type="evidence" value="ECO:0000316"/>
    <property type="project" value="dictyBase"/>
</dbReference>
<dbReference type="GO" id="GO:1903013">
    <property type="term" value="P:response to differentiation-inducing factor 1"/>
    <property type="evidence" value="ECO:0007005"/>
    <property type="project" value="dictyBase"/>
</dbReference>
<dbReference type="GO" id="GO:0042542">
    <property type="term" value="P:response to hydrogen peroxide"/>
    <property type="evidence" value="ECO:0000314"/>
    <property type="project" value="dictyBase"/>
</dbReference>
<dbReference type="GO" id="GO:0031153">
    <property type="term" value="P:slug development involved in sorocarp development"/>
    <property type="evidence" value="ECO:0000314"/>
    <property type="project" value="dictyBase"/>
</dbReference>
<dbReference type="FunFam" id="1.10.510.10:FF:000008">
    <property type="entry name" value="Non-specific serine/threonine protein kinase"/>
    <property type="match status" value="1"/>
</dbReference>
<dbReference type="FunFam" id="3.30.200.20:FF:000048">
    <property type="entry name" value="Non-specific serine/threonine protein kinase"/>
    <property type="match status" value="1"/>
</dbReference>
<dbReference type="FunFam" id="2.30.29.30:FF:000286">
    <property type="entry name" value="PH-protein kinase domain containing protein"/>
    <property type="match status" value="1"/>
</dbReference>
<dbReference type="Gene3D" id="3.30.200.20">
    <property type="entry name" value="Phosphorylase Kinase, domain 1"/>
    <property type="match status" value="1"/>
</dbReference>
<dbReference type="Gene3D" id="2.30.29.30">
    <property type="entry name" value="Pleckstrin-homology domain (PH domain)/Phosphotyrosine-binding domain (PTB)"/>
    <property type="match status" value="1"/>
</dbReference>
<dbReference type="Gene3D" id="1.10.510.10">
    <property type="entry name" value="Transferase(Phosphotransferase) domain 1"/>
    <property type="match status" value="1"/>
</dbReference>
<dbReference type="InterPro" id="IPR000961">
    <property type="entry name" value="AGC-kinase_C"/>
</dbReference>
<dbReference type="InterPro" id="IPR011009">
    <property type="entry name" value="Kinase-like_dom_sf"/>
</dbReference>
<dbReference type="InterPro" id="IPR011993">
    <property type="entry name" value="PH-like_dom_sf"/>
</dbReference>
<dbReference type="InterPro" id="IPR001849">
    <property type="entry name" value="PH_domain"/>
</dbReference>
<dbReference type="InterPro" id="IPR017892">
    <property type="entry name" value="Pkinase_C"/>
</dbReference>
<dbReference type="InterPro" id="IPR000719">
    <property type="entry name" value="Prot_kinase_dom"/>
</dbReference>
<dbReference type="InterPro" id="IPR017441">
    <property type="entry name" value="Protein_kinase_ATP_BS"/>
</dbReference>
<dbReference type="InterPro" id="IPR008271">
    <property type="entry name" value="Ser/Thr_kinase_AS"/>
</dbReference>
<dbReference type="PANTHER" id="PTHR24351">
    <property type="entry name" value="RIBOSOMAL PROTEIN S6 KINASE"/>
    <property type="match status" value="1"/>
</dbReference>
<dbReference type="Pfam" id="PF00169">
    <property type="entry name" value="PH"/>
    <property type="match status" value="1"/>
</dbReference>
<dbReference type="Pfam" id="PF00069">
    <property type="entry name" value="Pkinase"/>
    <property type="match status" value="1"/>
</dbReference>
<dbReference type="Pfam" id="PF00433">
    <property type="entry name" value="Pkinase_C"/>
    <property type="match status" value="1"/>
</dbReference>
<dbReference type="SMART" id="SM00233">
    <property type="entry name" value="PH"/>
    <property type="match status" value="1"/>
</dbReference>
<dbReference type="SMART" id="SM00133">
    <property type="entry name" value="S_TK_X"/>
    <property type="match status" value="1"/>
</dbReference>
<dbReference type="SMART" id="SM00220">
    <property type="entry name" value="S_TKc"/>
    <property type="match status" value="1"/>
</dbReference>
<dbReference type="SUPFAM" id="SSF50729">
    <property type="entry name" value="PH domain-like"/>
    <property type="match status" value="1"/>
</dbReference>
<dbReference type="SUPFAM" id="SSF56112">
    <property type="entry name" value="Protein kinase-like (PK-like)"/>
    <property type="match status" value="1"/>
</dbReference>
<dbReference type="PROSITE" id="PS51285">
    <property type="entry name" value="AGC_KINASE_CTER"/>
    <property type="match status" value="1"/>
</dbReference>
<dbReference type="PROSITE" id="PS50003">
    <property type="entry name" value="PH_DOMAIN"/>
    <property type="match status" value="1"/>
</dbReference>
<dbReference type="PROSITE" id="PS00107">
    <property type="entry name" value="PROTEIN_KINASE_ATP"/>
    <property type="match status" value="1"/>
</dbReference>
<dbReference type="PROSITE" id="PS50011">
    <property type="entry name" value="PROTEIN_KINASE_DOM"/>
    <property type="match status" value="1"/>
</dbReference>
<dbReference type="PROSITE" id="PS00108">
    <property type="entry name" value="PROTEIN_KINASE_ST"/>
    <property type="match status" value="1"/>
</dbReference>
<reference key="1">
    <citation type="submission" date="1995-09" db="EMBL/GenBank/DDBJ databases">
        <title>Targeted disruption of a human rac protein kinase homolog gene encoding a pleckstrin homology domain causes heterochronic development in Dictyostelium.</title>
        <authorList>
            <person name="Moon B."/>
            <person name="Haribabu B."/>
            <person name="Rabino M."/>
            <person name="Ortiz B."/>
            <person name="Reichel G."/>
            <person name="Skehel P."/>
            <person name="Williams J."/>
            <person name="Bouzid S."/>
            <person name="Veron M."/>
            <person name="Dottin R.P."/>
        </authorList>
    </citation>
    <scope>NUCLEOTIDE SEQUENCE [MRNA]</scope>
    <source>
        <strain>AX3</strain>
    </source>
</reference>
<reference key="2">
    <citation type="journal article" date="2005" name="Nature">
        <title>The genome of the social amoeba Dictyostelium discoideum.</title>
        <authorList>
            <person name="Eichinger L."/>
            <person name="Pachebat J.A."/>
            <person name="Gloeckner G."/>
            <person name="Rajandream M.A."/>
            <person name="Sucgang R."/>
            <person name="Berriman M."/>
            <person name="Song J."/>
            <person name="Olsen R."/>
            <person name="Szafranski K."/>
            <person name="Xu Q."/>
            <person name="Tunggal B."/>
            <person name="Kummerfeld S."/>
            <person name="Madera M."/>
            <person name="Konfortov B.A."/>
            <person name="Rivero F."/>
            <person name="Bankier A.T."/>
            <person name="Lehmann R."/>
            <person name="Hamlin N."/>
            <person name="Davies R."/>
            <person name="Gaudet P."/>
            <person name="Fey P."/>
            <person name="Pilcher K."/>
            <person name="Chen G."/>
            <person name="Saunders D."/>
            <person name="Sodergren E.J."/>
            <person name="Davis P."/>
            <person name="Kerhornou A."/>
            <person name="Nie X."/>
            <person name="Hall N."/>
            <person name="Anjard C."/>
            <person name="Hemphill L."/>
            <person name="Bason N."/>
            <person name="Farbrother P."/>
            <person name="Desany B."/>
            <person name="Just E."/>
            <person name="Morio T."/>
            <person name="Rost R."/>
            <person name="Churcher C.M."/>
            <person name="Cooper J."/>
            <person name="Haydock S."/>
            <person name="van Driessche N."/>
            <person name="Cronin A."/>
            <person name="Goodhead I."/>
            <person name="Muzny D.M."/>
            <person name="Mourier T."/>
            <person name="Pain A."/>
            <person name="Lu M."/>
            <person name="Harper D."/>
            <person name="Lindsay R."/>
            <person name="Hauser H."/>
            <person name="James K.D."/>
            <person name="Quiles M."/>
            <person name="Madan Babu M."/>
            <person name="Saito T."/>
            <person name="Buchrieser C."/>
            <person name="Wardroper A."/>
            <person name="Felder M."/>
            <person name="Thangavelu M."/>
            <person name="Johnson D."/>
            <person name="Knights A."/>
            <person name="Loulseged H."/>
            <person name="Mungall K.L."/>
            <person name="Oliver K."/>
            <person name="Price C."/>
            <person name="Quail M.A."/>
            <person name="Urushihara H."/>
            <person name="Hernandez J."/>
            <person name="Rabbinowitsch E."/>
            <person name="Steffen D."/>
            <person name="Sanders M."/>
            <person name="Ma J."/>
            <person name="Kohara Y."/>
            <person name="Sharp S."/>
            <person name="Simmonds M.N."/>
            <person name="Spiegler S."/>
            <person name="Tivey A."/>
            <person name="Sugano S."/>
            <person name="White B."/>
            <person name="Walker D."/>
            <person name="Woodward J.R."/>
            <person name="Winckler T."/>
            <person name="Tanaka Y."/>
            <person name="Shaulsky G."/>
            <person name="Schleicher M."/>
            <person name="Weinstock G.M."/>
            <person name="Rosenthal A."/>
            <person name="Cox E.C."/>
            <person name="Chisholm R.L."/>
            <person name="Gibbs R.A."/>
            <person name="Loomis W.F."/>
            <person name="Platzer M."/>
            <person name="Kay R.R."/>
            <person name="Williams J.G."/>
            <person name="Dear P.H."/>
            <person name="Noegel A.A."/>
            <person name="Barrell B.G."/>
            <person name="Kuspa A."/>
        </authorList>
    </citation>
    <scope>NUCLEOTIDE SEQUENCE [LARGE SCALE GENOMIC DNA]</scope>
    <source>
        <strain>AX4</strain>
    </source>
</reference>
<reference key="3">
    <citation type="journal article" date="1999" name="EMBO J.">
        <title>Chemoattractant-mediated transient activation and membrane localization of Akt/PKB is required for efficient chemotaxis to cAMP in Dictyostelium.</title>
        <authorList>
            <person name="Meili R."/>
            <person name="Ellsworth C."/>
            <person name="Lee S."/>
            <person name="Reddy T.B."/>
            <person name="Ma H."/>
            <person name="Firtel R.A."/>
        </authorList>
    </citation>
    <scope>DEVELOPMENTAL STAGE</scope>
    <scope>DISRUPTION PHENOTYPE</scope>
</reference>
<reference key="4">
    <citation type="journal article" date="2000" name="Curr. Biol.">
        <title>A novel Akt/PKB-related kinase is essential for morphogenesis in Dictyostelium.</title>
        <authorList>
            <person name="Meili R."/>
            <person name="Ellsworth C."/>
            <person name="Firtel R.A."/>
        </authorList>
    </citation>
    <scope>FUNCTION</scope>
</reference>
<reference key="5">
    <citation type="journal article" date="2008" name="Curr. Biol.">
        <title>PIP3-independent activation of TorC2 and PKB at the cell's leading edge mediates chemotaxis.</title>
        <authorList>
            <person name="Kamimura Y."/>
            <person name="Xiong Y."/>
            <person name="Iglesias P.A."/>
            <person name="Hoeller O."/>
            <person name="Bolourani P."/>
            <person name="Devreotes P.N."/>
        </authorList>
    </citation>
    <scope>FUNCTION</scope>
    <scope>PHOSPHORYLATION AT THR-278</scope>
</reference>
<sequence>MSTAPIKHEGFLTKEGGGFKSWKKRWFILKGGDLSYYKTKGELVPLGVIHLNTSGHIKNSDRKKRVNGFEVQTPSRTYFLCSETEEERAKWIEILINERELLLNGGKQPKKSEKVGVADFELLNLVGKGSFGKVIQVRKKDTGEVYAMKVLSKKHIVEHNEVEHTLSERNILQKINHPFLVNLNYSFQTEDKLYFILDYVNGGELFYHLQKDKKFTEDRVRYYGAEIVLALEHLHLSGVIYRDLKPENLLLTNEGHICMTDFGLCKEGLLTPTDKTGTFCGTPEYLAPEVLQGNGYGKQVDWWSFGSLLYEMLTGLPPFYNQDVQEMYRKIMMEKLSFPHFISPDARSLLEQLLERDPEKRLADPNLIKRHPFFRSIDWEQLFQKNIPPPFIPNVKGSADTSQIDPVFTDEAPSLTMAGECALNPQQQKDFEGFTYVAESEHLR</sequence>
<gene>
    <name type="primary">pkbA</name>
    <name type="synonym">akt</name>
    <name type="synonym">dagA</name>
    <name type="ORF">DDB_G0268620</name>
</gene>
<proteinExistence type="evidence at protein level"/>
<comment type="function">
    <text evidence="6 7">Predominantly involved during the aggregation to control cell polarity and chemotaxis. Phosphorylates talB, gefN, gefS, PI4P 5-kinase and gacQ.</text>
</comment>
<comment type="catalytic activity">
    <reaction>
        <text>L-seryl-[protein] + ATP = O-phospho-L-seryl-[protein] + ADP + H(+)</text>
        <dbReference type="Rhea" id="RHEA:17989"/>
        <dbReference type="Rhea" id="RHEA-COMP:9863"/>
        <dbReference type="Rhea" id="RHEA-COMP:11604"/>
        <dbReference type="ChEBI" id="CHEBI:15378"/>
        <dbReference type="ChEBI" id="CHEBI:29999"/>
        <dbReference type="ChEBI" id="CHEBI:30616"/>
        <dbReference type="ChEBI" id="CHEBI:83421"/>
        <dbReference type="ChEBI" id="CHEBI:456216"/>
        <dbReference type="EC" id="2.7.11.1"/>
    </reaction>
</comment>
<comment type="catalytic activity">
    <reaction>
        <text>L-threonyl-[protein] + ATP = O-phospho-L-threonyl-[protein] + ADP + H(+)</text>
        <dbReference type="Rhea" id="RHEA:46608"/>
        <dbReference type="Rhea" id="RHEA-COMP:11060"/>
        <dbReference type="Rhea" id="RHEA-COMP:11605"/>
        <dbReference type="ChEBI" id="CHEBI:15378"/>
        <dbReference type="ChEBI" id="CHEBI:30013"/>
        <dbReference type="ChEBI" id="CHEBI:30616"/>
        <dbReference type="ChEBI" id="CHEBI:61977"/>
        <dbReference type="ChEBI" id="CHEBI:456216"/>
        <dbReference type="EC" id="2.7.11.1"/>
    </reaction>
</comment>
<comment type="developmental stage">
    <text evidence="5">Preferentially expressed during growth and aggregation.</text>
</comment>
<comment type="disruption phenotype">
    <text evidence="5">Cells exhibit aggregation-stage defects, with the aggregates that form producing normal fruiting bodies.</text>
</comment>
<comment type="similarity">
    <text evidence="8">Belongs to the protein kinase superfamily. AGC Ser/Thr protein kinase family. RAC subfamily.</text>
</comment>
<evidence type="ECO:0000255" key="1">
    <source>
        <dbReference type="PROSITE-ProRule" id="PRU00145"/>
    </source>
</evidence>
<evidence type="ECO:0000255" key="2">
    <source>
        <dbReference type="PROSITE-ProRule" id="PRU00159"/>
    </source>
</evidence>
<evidence type="ECO:0000255" key="3">
    <source>
        <dbReference type="PROSITE-ProRule" id="PRU00618"/>
    </source>
</evidence>
<evidence type="ECO:0000255" key="4">
    <source>
        <dbReference type="PROSITE-ProRule" id="PRU10027"/>
    </source>
</evidence>
<evidence type="ECO:0000269" key="5">
    <source>
    </source>
</evidence>
<evidence type="ECO:0000269" key="6">
    <source>
    </source>
</evidence>
<evidence type="ECO:0000269" key="7">
    <source>
    </source>
</evidence>
<evidence type="ECO:0000305" key="8"/>